<name>TSGA_SHISS</name>
<evidence type="ECO:0000255" key="1">
    <source>
        <dbReference type="HAMAP-Rule" id="MF_01044"/>
    </source>
</evidence>
<keyword id="KW-0997">Cell inner membrane</keyword>
<keyword id="KW-1003">Cell membrane</keyword>
<keyword id="KW-0472">Membrane</keyword>
<keyword id="KW-1185">Reference proteome</keyword>
<keyword id="KW-0812">Transmembrane</keyword>
<keyword id="KW-1133">Transmembrane helix</keyword>
<organism>
    <name type="scientific">Shigella sonnei (strain Ss046)</name>
    <dbReference type="NCBI Taxonomy" id="300269"/>
    <lineage>
        <taxon>Bacteria</taxon>
        <taxon>Pseudomonadati</taxon>
        <taxon>Pseudomonadota</taxon>
        <taxon>Gammaproteobacteria</taxon>
        <taxon>Enterobacterales</taxon>
        <taxon>Enterobacteriaceae</taxon>
        <taxon>Shigella</taxon>
    </lineage>
</organism>
<feature type="chain" id="PRO_1000064255" description="Protein TsgA">
    <location>
        <begin position="1"/>
        <end position="393"/>
    </location>
</feature>
<feature type="transmembrane region" description="Helical" evidence="1">
    <location>
        <begin position="11"/>
        <end position="31"/>
    </location>
</feature>
<feature type="transmembrane region" description="Helical" evidence="1">
    <location>
        <begin position="51"/>
        <end position="71"/>
    </location>
</feature>
<feature type="transmembrane region" description="Helical" evidence="1">
    <location>
        <begin position="78"/>
        <end position="98"/>
    </location>
</feature>
<feature type="transmembrane region" description="Helical" evidence="1">
    <location>
        <begin position="101"/>
        <end position="121"/>
    </location>
</feature>
<feature type="transmembrane region" description="Helical" evidence="1">
    <location>
        <begin position="134"/>
        <end position="154"/>
    </location>
</feature>
<feature type="transmembrane region" description="Helical" evidence="1">
    <location>
        <begin position="162"/>
        <end position="182"/>
    </location>
</feature>
<feature type="transmembrane region" description="Helical" evidence="1">
    <location>
        <begin position="206"/>
        <end position="226"/>
    </location>
</feature>
<feature type="transmembrane region" description="Helical" evidence="1">
    <location>
        <begin position="245"/>
        <end position="265"/>
    </location>
</feature>
<feature type="transmembrane region" description="Helical" evidence="1">
    <location>
        <begin position="273"/>
        <end position="293"/>
    </location>
</feature>
<feature type="transmembrane region" description="Helical" evidence="1">
    <location>
        <begin position="297"/>
        <end position="317"/>
    </location>
</feature>
<feature type="transmembrane region" description="Helical" evidence="1">
    <location>
        <begin position="332"/>
        <end position="352"/>
    </location>
</feature>
<feature type="transmembrane region" description="Helical" evidence="1">
    <location>
        <begin position="361"/>
        <end position="381"/>
    </location>
</feature>
<accession>Q3YWQ7</accession>
<protein>
    <recommendedName>
        <fullName evidence="1">Protein TsgA</fullName>
    </recommendedName>
</protein>
<sequence length="393" mass="43210">MTNSNRIKLTWISFLSYALTGALVIVTGMVMGNIADYFNLPVSSMSNTFTFLNAGILISIFLNAWLMEIVPLKTQLRFGFLLMVLAVAGLMFSHSLALFSTAMFILGVVSGITMSIGTFLITQMYEGRQRGSRLLFTDSFFSMAGMIFPMIAAFLLARSIEWYWVYACIGLVYVAIFILTFGCEFPALGKHAPKTDAPVEKEKWGIGVLFLSVAALCYILGQLGFISWVPEYAKGLGMSLNDAGTLVSNFWMSYMVGMWAFSFILRFFDLQRILTVLAGLAAILMYVFNTGTPAHMAWSILALGFFSSAIYTTIITLGSQQTKVPSPKLVNFVLTCGTIGTMLTFVVTGPIVEHSGPQAALLTANGLYAVVFVMCFLLGFVSRHRQHNTLTSH</sequence>
<proteinExistence type="inferred from homology"/>
<dbReference type="EMBL" id="CP000038">
    <property type="protein sequence ID" value="AAZ90055.1"/>
    <property type="molecule type" value="Genomic_DNA"/>
</dbReference>
<dbReference type="RefSeq" id="WP_000185258.1">
    <property type="nucleotide sequence ID" value="NC_007384.1"/>
</dbReference>
<dbReference type="SMR" id="Q3YWQ7"/>
<dbReference type="GeneID" id="93778633"/>
<dbReference type="KEGG" id="ssn:SSON_3495"/>
<dbReference type="HOGENOM" id="CLU_056916_0_0_6"/>
<dbReference type="Proteomes" id="UP000002529">
    <property type="component" value="Chromosome"/>
</dbReference>
<dbReference type="GO" id="GO:0005886">
    <property type="term" value="C:plasma membrane"/>
    <property type="evidence" value="ECO:0007669"/>
    <property type="project" value="UniProtKB-SubCell"/>
</dbReference>
<dbReference type="GO" id="GO:0022857">
    <property type="term" value="F:transmembrane transporter activity"/>
    <property type="evidence" value="ECO:0007669"/>
    <property type="project" value="InterPro"/>
</dbReference>
<dbReference type="CDD" id="cd17333">
    <property type="entry name" value="MFS_FucP_MFSD4_like"/>
    <property type="match status" value="1"/>
</dbReference>
<dbReference type="FunFam" id="1.20.1250.20:FF:000032">
    <property type="entry name" value="Protein TsgA"/>
    <property type="match status" value="1"/>
</dbReference>
<dbReference type="FunFam" id="1.20.1250.20:FF:000052">
    <property type="entry name" value="Protein TsgA"/>
    <property type="match status" value="1"/>
</dbReference>
<dbReference type="Gene3D" id="1.20.1250.20">
    <property type="entry name" value="MFS general substrate transporter like domains"/>
    <property type="match status" value="2"/>
</dbReference>
<dbReference type="HAMAP" id="MF_01044">
    <property type="entry name" value="MFS_TsgA"/>
    <property type="match status" value="1"/>
</dbReference>
<dbReference type="InterPro" id="IPR011701">
    <property type="entry name" value="MFS"/>
</dbReference>
<dbReference type="InterPro" id="IPR020846">
    <property type="entry name" value="MFS_dom"/>
</dbReference>
<dbReference type="InterPro" id="IPR036259">
    <property type="entry name" value="MFS_trans_sf"/>
</dbReference>
<dbReference type="InterPro" id="IPR023528">
    <property type="entry name" value="MFS_TsgA"/>
</dbReference>
<dbReference type="InterPro" id="IPR050375">
    <property type="entry name" value="MFS_TsgA-like"/>
</dbReference>
<dbReference type="NCBIfam" id="NF002982">
    <property type="entry name" value="PRK03699.1"/>
    <property type="match status" value="1"/>
</dbReference>
<dbReference type="PANTHER" id="PTHR43702">
    <property type="entry name" value="L-FUCOSE-PROTON SYMPORTER"/>
    <property type="match status" value="1"/>
</dbReference>
<dbReference type="PANTHER" id="PTHR43702:SF3">
    <property type="entry name" value="PROTEIN TSGA"/>
    <property type="match status" value="1"/>
</dbReference>
<dbReference type="Pfam" id="PF07690">
    <property type="entry name" value="MFS_1"/>
    <property type="match status" value="1"/>
</dbReference>
<dbReference type="SUPFAM" id="SSF103473">
    <property type="entry name" value="MFS general substrate transporter"/>
    <property type="match status" value="1"/>
</dbReference>
<dbReference type="PROSITE" id="PS50850">
    <property type="entry name" value="MFS"/>
    <property type="match status" value="1"/>
</dbReference>
<comment type="subcellular location">
    <subcellularLocation>
        <location evidence="1">Cell inner membrane</location>
        <topology evidence="1">Multi-pass membrane protein</topology>
    </subcellularLocation>
</comment>
<comment type="similarity">
    <text evidence="1">Belongs to the major facilitator superfamily. TsgA family.</text>
</comment>
<gene>
    <name evidence="1" type="primary">tsgA</name>
    <name type="ordered locus">SSON_3495</name>
</gene>
<reference key="1">
    <citation type="journal article" date="2005" name="Nucleic Acids Res.">
        <title>Genome dynamics and diversity of Shigella species, the etiologic agents of bacillary dysentery.</title>
        <authorList>
            <person name="Yang F."/>
            <person name="Yang J."/>
            <person name="Zhang X."/>
            <person name="Chen L."/>
            <person name="Jiang Y."/>
            <person name="Yan Y."/>
            <person name="Tang X."/>
            <person name="Wang J."/>
            <person name="Xiong Z."/>
            <person name="Dong J."/>
            <person name="Xue Y."/>
            <person name="Zhu Y."/>
            <person name="Xu X."/>
            <person name="Sun L."/>
            <person name="Chen S."/>
            <person name="Nie H."/>
            <person name="Peng J."/>
            <person name="Xu J."/>
            <person name="Wang Y."/>
            <person name="Yuan Z."/>
            <person name="Wen Y."/>
            <person name="Yao Z."/>
            <person name="Shen Y."/>
            <person name="Qiang B."/>
            <person name="Hou Y."/>
            <person name="Yu J."/>
            <person name="Jin Q."/>
        </authorList>
    </citation>
    <scope>NUCLEOTIDE SEQUENCE [LARGE SCALE GENOMIC DNA]</scope>
    <source>
        <strain>Ss046</strain>
    </source>
</reference>